<protein>
    <recommendedName>
        <fullName>UPF0758 protein BURPS668_0979</fullName>
    </recommendedName>
</protein>
<accession>A3N6Q9</accession>
<proteinExistence type="inferred from homology"/>
<evidence type="ECO:0000255" key="1">
    <source>
        <dbReference type="PROSITE-ProRule" id="PRU01182"/>
    </source>
</evidence>
<evidence type="ECO:0000256" key="2">
    <source>
        <dbReference type="SAM" id="MobiDB-lite"/>
    </source>
</evidence>
<evidence type="ECO:0000305" key="3"/>
<keyword id="KW-0378">Hydrolase</keyword>
<keyword id="KW-0479">Metal-binding</keyword>
<keyword id="KW-0482">Metalloprotease</keyword>
<keyword id="KW-0645">Protease</keyword>
<keyword id="KW-0862">Zinc</keyword>
<comment type="similarity">
    <text evidence="3">Belongs to the UPF0758 family.</text>
</comment>
<organism>
    <name type="scientific">Burkholderia pseudomallei (strain 668)</name>
    <dbReference type="NCBI Taxonomy" id="320373"/>
    <lineage>
        <taxon>Bacteria</taxon>
        <taxon>Pseudomonadati</taxon>
        <taxon>Pseudomonadota</taxon>
        <taxon>Betaproteobacteria</taxon>
        <taxon>Burkholderiales</taxon>
        <taxon>Burkholderiaceae</taxon>
        <taxon>Burkholderia</taxon>
        <taxon>pseudomallei group</taxon>
    </lineage>
</organism>
<dbReference type="EMBL" id="CP000570">
    <property type="protein sequence ID" value="ABN84392.1"/>
    <property type="molecule type" value="Genomic_DNA"/>
</dbReference>
<dbReference type="SMR" id="A3N6Q9"/>
<dbReference type="KEGG" id="bpd:BURPS668_0979"/>
<dbReference type="HOGENOM" id="CLU_073529_0_1_4"/>
<dbReference type="GO" id="GO:0046872">
    <property type="term" value="F:metal ion binding"/>
    <property type="evidence" value="ECO:0007669"/>
    <property type="project" value="UniProtKB-KW"/>
</dbReference>
<dbReference type="GO" id="GO:0008237">
    <property type="term" value="F:metallopeptidase activity"/>
    <property type="evidence" value="ECO:0007669"/>
    <property type="project" value="UniProtKB-KW"/>
</dbReference>
<dbReference type="GO" id="GO:0006508">
    <property type="term" value="P:proteolysis"/>
    <property type="evidence" value="ECO:0007669"/>
    <property type="project" value="UniProtKB-KW"/>
</dbReference>
<dbReference type="CDD" id="cd08071">
    <property type="entry name" value="MPN_DUF2466"/>
    <property type="match status" value="1"/>
</dbReference>
<dbReference type="Gene3D" id="1.10.150.20">
    <property type="entry name" value="5' to 3' exonuclease, C-terminal subdomain"/>
    <property type="match status" value="1"/>
</dbReference>
<dbReference type="Gene3D" id="3.40.140.10">
    <property type="entry name" value="Cytidine Deaminase, domain 2"/>
    <property type="match status" value="1"/>
</dbReference>
<dbReference type="InterPro" id="IPR037518">
    <property type="entry name" value="MPN"/>
</dbReference>
<dbReference type="InterPro" id="IPR025657">
    <property type="entry name" value="RadC_JAB"/>
</dbReference>
<dbReference type="InterPro" id="IPR010994">
    <property type="entry name" value="RuvA_2-like"/>
</dbReference>
<dbReference type="InterPro" id="IPR001405">
    <property type="entry name" value="UPF0758"/>
</dbReference>
<dbReference type="InterPro" id="IPR020891">
    <property type="entry name" value="UPF0758_CS"/>
</dbReference>
<dbReference type="InterPro" id="IPR046778">
    <property type="entry name" value="UPF0758_N"/>
</dbReference>
<dbReference type="NCBIfam" id="NF000642">
    <property type="entry name" value="PRK00024.1"/>
    <property type="match status" value="1"/>
</dbReference>
<dbReference type="NCBIfam" id="TIGR00608">
    <property type="entry name" value="radc"/>
    <property type="match status" value="1"/>
</dbReference>
<dbReference type="PANTHER" id="PTHR30471">
    <property type="entry name" value="DNA REPAIR PROTEIN RADC"/>
    <property type="match status" value="1"/>
</dbReference>
<dbReference type="PANTHER" id="PTHR30471:SF3">
    <property type="entry name" value="UPF0758 PROTEIN YEES-RELATED"/>
    <property type="match status" value="1"/>
</dbReference>
<dbReference type="Pfam" id="PF04002">
    <property type="entry name" value="RadC"/>
    <property type="match status" value="1"/>
</dbReference>
<dbReference type="Pfam" id="PF20582">
    <property type="entry name" value="UPF0758_N"/>
    <property type="match status" value="1"/>
</dbReference>
<dbReference type="SUPFAM" id="SSF102712">
    <property type="entry name" value="JAB1/MPN domain"/>
    <property type="match status" value="1"/>
</dbReference>
<dbReference type="SUPFAM" id="SSF47781">
    <property type="entry name" value="RuvA domain 2-like"/>
    <property type="match status" value="1"/>
</dbReference>
<dbReference type="PROSITE" id="PS50249">
    <property type="entry name" value="MPN"/>
    <property type="match status" value="1"/>
</dbReference>
<dbReference type="PROSITE" id="PS01302">
    <property type="entry name" value="UPF0758"/>
    <property type="match status" value="1"/>
</dbReference>
<sequence>MQYEIVSAGEDVDDERARGRRAAAPAAPSSAVPSSAALSSAALSSAARPTGAPPATAAARRGRDLPRERLLARGPAALSDAELVALLLGSGLPGHDVFALAHTLLARFGSLRALLDAAPDDFKGLRGIGPARTAILVAVVELARRALAEKARERPLVDSPGAVDDYLRLLIGTRPREVFVCLFLDARHRLVQTEETAHGSLTRMAVYPREIVRRALALNAAALIVAHNHPSGAVRPSAADRRLTRVLRDALALVDIKLIDHFVVGASDTFSFAQAGWI</sequence>
<reference key="1">
    <citation type="journal article" date="2010" name="Genome Biol. Evol.">
        <title>Continuing evolution of Burkholderia mallei through genome reduction and large-scale rearrangements.</title>
        <authorList>
            <person name="Losada L."/>
            <person name="Ronning C.M."/>
            <person name="DeShazer D."/>
            <person name="Woods D."/>
            <person name="Fedorova N."/>
            <person name="Kim H.S."/>
            <person name="Shabalina S.A."/>
            <person name="Pearson T.R."/>
            <person name="Brinkac L."/>
            <person name="Tan P."/>
            <person name="Nandi T."/>
            <person name="Crabtree J."/>
            <person name="Badger J."/>
            <person name="Beckstrom-Sternberg S."/>
            <person name="Saqib M."/>
            <person name="Schutzer S.E."/>
            <person name="Keim P."/>
            <person name="Nierman W.C."/>
        </authorList>
    </citation>
    <scope>NUCLEOTIDE SEQUENCE [LARGE SCALE GENOMIC DNA]</scope>
    <source>
        <strain>668</strain>
    </source>
</reference>
<feature type="chain" id="PRO_0000322677" description="UPF0758 protein BURPS668_0979">
    <location>
        <begin position="1"/>
        <end position="278"/>
    </location>
</feature>
<feature type="domain" description="MPN" evidence="1">
    <location>
        <begin position="156"/>
        <end position="278"/>
    </location>
</feature>
<feature type="region of interest" description="Disordered" evidence="2">
    <location>
        <begin position="1"/>
        <end position="64"/>
    </location>
</feature>
<feature type="short sequence motif" description="JAMM motif" evidence="1">
    <location>
        <begin position="227"/>
        <end position="240"/>
    </location>
</feature>
<feature type="compositionally biased region" description="Low complexity" evidence="2">
    <location>
        <begin position="22"/>
        <end position="59"/>
    </location>
</feature>
<feature type="binding site" evidence="1">
    <location>
        <position position="227"/>
    </location>
    <ligand>
        <name>Zn(2+)</name>
        <dbReference type="ChEBI" id="CHEBI:29105"/>
        <note>catalytic</note>
    </ligand>
</feature>
<feature type="binding site" evidence="1">
    <location>
        <position position="229"/>
    </location>
    <ligand>
        <name>Zn(2+)</name>
        <dbReference type="ChEBI" id="CHEBI:29105"/>
        <note>catalytic</note>
    </ligand>
</feature>
<feature type="binding site" evidence="1">
    <location>
        <position position="240"/>
    </location>
    <ligand>
        <name>Zn(2+)</name>
        <dbReference type="ChEBI" id="CHEBI:29105"/>
        <note>catalytic</note>
    </ligand>
</feature>
<gene>
    <name type="ordered locus">BURPS668_0979</name>
</gene>
<name>Y979_BURP6</name>